<protein>
    <recommendedName>
        <fullName evidence="1">DNA-directed RNA polymerase subunit alpha</fullName>
        <shortName evidence="1">RNAP subunit alpha</shortName>
        <ecNumber evidence="1">2.7.7.6</ecNumber>
    </recommendedName>
    <alternativeName>
        <fullName evidence="1">RNA polymerase subunit alpha</fullName>
    </alternativeName>
    <alternativeName>
        <fullName evidence="1">Transcriptase subunit alpha</fullName>
    </alternativeName>
</protein>
<organism>
    <name type="scientific">Deinococcus geothermalis (strain DSM 11300 / CIP 105573 / AG-3a)</name>
    <dbReference type="NCBI Taxonomy" id="319795"/>
    <lineage>
        <taxon>Bacteria</taxon>
        <taxon>Thermotogati</taxon>
        <taxon>Deinococcota</taxon>
        <taxon>Deinococci</taxon>
        <taxon>Deinococcales</taxon>
        <taxon>Deinococcaceae</taxon>
        <taxon>Deinococcus</taxon>
    </lineage>
</organism>
<evidence type="ECO:0000255" key="1">
    <source>
        <dbReference type="HAMAP-Rule" id="MF_00059"/>
    </source>
</evidence>
<name>RPOA_DEIGD</name>
<gene>
    <name evidence="1" type="primary">rpoA</name>
    <name type="ordered locus">Dgeo_1840</name>
</gene>
<feature type="chain" id="PRO_0000264496" description="DNA-directed RNA polymerase subunit alpha">
    <location>
        <begin position="1"/>
        <end position="331"/>
    </location>
</feature>
<feature type="region of interest" description="Alpha N-terminal domain (alpha-NTD)" evidence="1">
    <location>
        <begin position="1"/>
        <end position="223"/>
    </location>
</feature>
<feature type="region of interest" description="Alpha C-terminal domain (alpha-CTD)" evidence="1">
    <location>
        <begin position="260"/>
        <end position="331"/>
    </location>
</feature>
<reference key="1">
    <citation type="submission" date="2006-04" db="EMBL/GenBank/DDBJ databases">
        <title>Complete sequence of chromosome of Deinococcus geothermalis DSM 11300.</title>
        <authorList>
            <person name="Copeland A."/>
            <person name="Lucas S."/>
            <person name="Lapidus A."/>
            <person name="Barry K."/>
            <person name="Detter J.C."/>
            <person name="Glavina del Rio T."/>
            <person name="Hammon N."/>
            <person name="Israni S."/>
            <person name="Dalin E."/>
            <person name="Tice H."/>
            <person name="Pitluck S."/>
            <person name="Brettin T."/>
            <person name="Bruce D."/>
            <person name="Han C."/>
            <person name="Tapia R."/>
            <person name="Saunders E."/>
            <person name="Gilna P."/>
            <person name="Schmutz J."/>
            <person name="Larimer F."/>
            <person name="Land M."/>
            <person name="Hauser L."/>
            <person name="Kyrpides N."/>
            <person name="Kim E."/>
            <person name="Daly M.J."/>
            <person name="Fredrickson J.K."/>
            <person name="Makarova K.S."/>
            <person name="Gaidamakova E.K."/>
            <person name="Zhai M."/>
            <person name="Richardson P."/>
        </authorList>
    </citation>
    <scope>NUCLEOTIDE SEQUENCE [LARGE SCALE GENOMIC DNA]</scope>
    <source>
        <strain>DSM 11300 / CIP 105573 / AG-3a</strain>
    </source>
</reference>
<sequence>MDQKRPQLKARVEGDYGEFVLEPLTRGYGVTIGNPIRRILMSSIPGTAVTSVYIEDVLHEFSTIPGVKEDVIRIILNLKELVVKFHAPGPKTLTLRAQGEGVVKASAFEVPSDAEIVNPDLTIATLAEDGKLVMEVRVEEGEGYVPADKHATKDRINSIPVDAVFSPVRRVAYHVENTRVGQQTDLDRLILRIWTDGSVGPQEALDRAVEILRDELTVFGNVETVSAAAPELPSVYTPAAPIVSGYDLPRQPELSINPQPYPADLDTPRVTLEGLGLTTRVLHSLKEEGIDSVDALCALSDRDLKKVPGIGERSLDEIKQQLAQFGLALRD</sequence>
<keyword id="KW-0240">DNA-directed RNA polymerase</keyword>
<keyword id="KW-0548">Nucleotidyltransferase</keyword>
<keyword id="KW-0804">Transcription</keyword>
<keyword id="KW-0808">Transferase</keyword>
<dbReference type="EC" id="2.7.7.6" evidence="1"/>
<dbReference type="EMBL" id="CP000359">
    <property type="protein sequence ID" value="ABF46135.1"/>
    <property type="molecule type" value="Genomic_DNA"/>
</dbReference>
<dbReference type="RefSeq" id="WP_011530965.1">
    <property type="nucleotide sequence ID" value="NC_008025.1"/>
</dbReference>
<dbReference type="SMR" id="Q1IX99"/>
<dbReference type="STRING" id="319795.Dgeo_1840"/>
<dbReference type="KEGG" id="dge:Dgeo_1840"/>
<dbReference type="eggNOG" id="COG0202">
    <property type="taxonomic scope" value="Bacteria"/>
</dbReference>
<dbReference type="HOGENOM" id="CLU_053084_0_1_0"/>
<dbReference type="Proteomes" id="UP000002431">
    <property type="component" value="Chromosome"/>
</dbReference>
<dbReference type="GO" id="GO:0005737">
    <property type="term" value="C:cytoplasm"/>
    <property type="evidence" value="ECO:0007669"/>
    <property type="project" value="UniProtKB-ARBA"/>
</dbReference>
<dbReference type="GO" id="GO:0000428">
    <property type="term" value="C:DNA-directed RNA polymerase complex"/>
    <property type="evidence" value="ECO:0007669"/>
    <property type="project" value="UniProtKB-KW"/>
</dbReference>
<dbReference type="GO" id="GO:0003677">
    <property type="term" value="F:DNA binding"/>
    <property type="evidence" value="ECO:0007669"/>
    <property type="project" value="UniProtKB-UniRule"/>
</dbReference>
<dbReference type="GO" id="GO:0003899">
    <property type="term" value="F:DNA-directed RNA polymerase activity"/>
    <property type="evidence" value="ECO:0007669"/>
    <property type="project" value="UniProtKB-UniRule"/>
</dbReference>
<dbReference type="GO" id="GO:0046983">
    <property type="term" value="F:protein dimerization activity"/>
    <property type="evidence" value="ECO:0007669"/>
    <property type="project" value="InterPro"/>
</dbReference>
<dbReference type="GO" id="GO:0006351">
    <property type="term" value="P:DNA-templated transcription"/>
    <property type="evidence" value="ECO:0007669"/>
    <property type="project" value="UniProtKB-UniRule"/>
</dbReference>
<dbReference type="CDD" id="cd06928">
    <property type="entry name" value="RNAP_alpha_NTD"/>
    <property type="match status" value="1"/>
</dbReference>
<dbReference type="FunFam" id="2.170.120.12:FF:000001">
    <property type="entry name" value="DNA-directed RNA polymerase subunit alpha"/>
    <property type="match status" value="1"/>
</dbReference>
<dbReference type="Gene3D" id="1.10.150.20">
    <property type="entry name" value="5' to 3' exonuclease, C-terminal subdomain"/>
    <property type="match status" value="1"/>
</dbReference>
<dbReference type="Gene3D" id="2.170.120.12">
    <property type="entry name" value="DNA-directed RNA polymerase, insert domain"/>
    <property type="match status" value="1"/>
</dbReference>
<dbReference type="Gene3D" id="3.30.1360.10">
    <property type="entry name" value="RNA polymerase, RBP11-like subunit"/>
    <property type="match status" value="1"/>
</dbReference>
<dbReference type="HAMAP" id="MF_00059">
    <property type="entry name" value="RNApol_bact_RpoA"/>
    <property type="match status" value="1"/>
</dbReference>
<dbReference type="InterPro" id="IPR011262">
    <property type="entry name" value="DNA-dir_RNA_pol_insert"/>
</dbReference>
<dbReference type="InterPro" id="IPR011263">
    <property type="entry name" value="DNA-dir_RNA_pol_RpoA/D/Rpb3"/>
</dbReference>
<dbReference type="InterPro" id="IPR011773">
    <property type="entry name" value="DNA-dir_RpoA"/>
</dbReference>
<dbReference type="InterPro" id="IPR036603">
    <property type="entry name" value="RBP11-like"/>
</dbReference>
<dbReference type="InterPro" id="IPR011260">
    <property type="entry name" value="RNAP_asu_C"/>
</dbReference>
<dbReference type="InterPro" id="IPR036643">
    <property type="entry name" value="RNApol_insert_sf"/>
</dbReference>
<dbReference type="NCBIfam" id="NF003513">
    <property type="entry name" value="PRK05182.1-2"/>
    <property type="match status" value="1"/>
</dbReference>
<dbReference type="NCBIfam" id="NF003519">
    <property type="entry name" value="PRK05182.2-5"/>
    <property type="match status" value="1"/>
</dbReference>
<dbReference type="NCBIfam" id="TIGR02027">
    <property type="entry name" value="rpoA"/>
    <property type="match status" value="1"/>
</dbReference>
<dbReference type="Pfam" id="PF01000">
    <property type="entry name" value="RNA_pol_A_bac"/>
    <property type="match status" value="1"/>
</dbReference>
<dbReference type="Pfam" id="PF03118">
    <property type="entry name" value="RNA_pol_A_CTD"/>
    <property type="match status" value="1"/>
</dbReference>
<dbReference type="Pfam" id="PF01193">
    <property type="entry name" value="RNA_pol_L"/>
    <property type="match status" value="1"/>
</dbReference>
<dbReference type="SMART" id="SM00662">
    <property type="entry name" value="RPOLD"/>
    <property type="match status" value="1"/>
</dbReference>
<dbReference type="SUPFAM" id="SSF47789">
    <property type="entry name" value="C-terminal domain of RNA polymerase alpha subunit"/>
    <property type="match status" value="1"/>
</dbReference>
<dbReference type="SUPFAM" id="SSF56553">
    <property type="entry name" value="Insert subdomain of RNA polymerase alpha subunit"/>
    <property type="match status" value="1"/>
</dbReference>
<dbReference type="SUPFAM" id="SSF55257">
    <property type="entry name" value="RBP11-like subunits of RNA polymerase"/>
    <property type="match status" value="1"/>
</dbReference>
<comment type="function">
    <text evidence="1">DNA-dependent RNA polymerase catalyzes the transcription of DNA into RNA using the four ribonucleoside triphosphates as substrates.</text>
</comment>
<comment type="catalytic activity">
    <reaction evidence="1">
        <text>RNA(n) + a ribonucleoside 5'-triphosphate = RNA(n+1) + diphosphate</text>
        <dbReference type="Rhea" id="RHEA:21248"/>
        <dbReference type="Rhea" id="RHEA-COMP:14527"/>
        <dbReference type="Rhea" id="RHEA-COMP:17342"/>
        <dbReference type="ChEBI" id="CHEBI:33019"/>
        <dbReference type="ChEBI" id="CHEBI:61557"/>
        <dbReference type="ChEBI" id="CHEBI:140395"/>
        <dbReference type="EC" id="2.7.7.6"/>
    </reaction>
</comment>
<comment type="subunit">
    <text evidence="1">Homodimer. The RNAP catalytic core consists of 2 alpha, 1 beta, 1 beta' and 1 omega subunit. When a sigma factor is associated with the core the holoenzyme is formed, which can initiate transcription.</text>
</comment>
<comment type="domain">
    <text evidence="1">The N-terminal domain is essential for RNAP assembly and basal transcription, whereas the C-terminal domain is involved in interaction with transcriptional regulators and with upstream promoter elements.</text>
</comment>
<comment type="similarity">
    <text evidence="1">Belongs to the RNA polymerase alpha chain family.</text>
</comment>
<accession>Q1IX99</accession>
<proteinExistence type="inferred from homology"/>